<reference key="1">
    <citation type="submission" date="2005-08" db="EMBL/GenBank/DDBJ databases">
        <title>Complete sequence of Synechococcus sp. CC9902.</title>
        <authorList>
            <person name="Copeland A."/>
            <person name="Lucas S."/>
            <person name="Lapidus A."/>
            <person name="Barry K."/>
            <person name="Detter J.C."/>
            <person name="Glavina T."/>
            <person name="Hammon N."/>
            <person name="Israni S."/>
            <person name="Pitluck S."/>
            <person name="Martinez M."/>
            <person name="Schmutz J."/>
            <person name="Larimer F."/>
            <person name="Land M."/>
            <person name="Kyrpides N."/>
            <person name="Ivanova N."/>
            <person name="Richardson P."/>
        </authorList>
    </citation>
    <scope>NUCLEOTIDE SEQUENCE [LARGE SCALE GENOMIC DNA]</scope>
    <source>
        <strain>CC9902</strain>
    </source>
</reference>
<evidence type="ECO:0000255" key="1">
    <source>
        <dbReference type="HAMAP-Rule" id="MF_01354"/>
    </source>
</evidence>
<feature type="chain" id="PRO_0000353656" description="NAD(P)H-quinone oxidoreductase subunit O">
    <location>
        <begin position="1"/>
        <end position="84"/>
    </location>
</feature>
<sequence length="84" mass="9133">MADSDTSAPAKAKPAALRKGALVKVNRKAYSASIEAAASDPTPPDYIFDGPGELLVVKGDYGQVRWNRPVPDVWLRMDQLEVYS</sequence>
<proteinExistence type="inferred from homology"/>
<gene>
    <name evidence="1" type="primary">ndhO</name>
    <name type="ordered locus">Syncc9902_0328</name>
</gene>
<protein>
    <recommendedName>
        <fullName evidence="1">NAD(P)H-quinone oxidoreductase subunit O</fullName>
        <ecNumber evidence="1">7.1.1.-</ecNumber>
    </recommendedName>
    <alternativeName>
        <fullName evidence="1">NAD(P)H dehydrogenase I subunit O</fullName>
    </alternativeName>
    <alternativeName>
        <fullName>NDH-1 subunit O</fullName>
    </alternativeName>
    <alternativeName>
        <fullName>NDH-O</fullName>
    </alternativeName>
</protein>
<dbReference type="EC" id="7.1.1.-" evidence="1"/>
<dbReference type="EMBL" id="CP000097">
    <property type="protein sequence ID" value="ABB25300.1"/>
    <property type="molecule type" value="Genomic_DNA"/>
</dbReference>
<dbReference type="RefSeq" id="WP_011359157.1">
    <property type="nucleotide sequence ID" value="NC_007513.1"/>
</dbReference>
<dbReference type="SMR" id="Q3B027"/>
<dbReference type="STRING" id="316279.Syncc9902_0328"/>
<dbReference type="KEGG" id="sye:Syncc9902_0328"/>
<dbReference type="eggNOG" id="ENOG5032XZT">
    <property type="taxonomic scope" value="Bacteria"/>
</dbReference>
<dbReference type="HOGENOM" id="CLU_195299_0_0_3"/>
<dbReference type="OrthoDB" id="426633at2"/>
<dbReference type="Proteomes" id="UP000002712">
    <property type="component" value="Chromosome"/>
</dbReference>
<dbReference type="GO" id="GO:0031676">
    <property type="term" value="C:plasma membrane-derived thylakoid membrane"/>
    <property type="evidence" value="ECO:0007669"/>
    <property type="project" value="UniProtKB-SubCell"/>
</dbReference>
<dbReference type="GO" id="GO:0016655">
    <property type="term" value="F:oxidoreductase activity, acting on NAD(P)H, quinone or similar compound as acceptor"/>
    <property type="evidence" value="ECO:0007669"/>
    <property type="project" value="UniProtKB-UniRule"/>
</dbReference>
<dbReference type="GO" id="GO:0048038">
    <property type="term" value="F:quinone binding"/>
    <property type="evidence" value="ECO:0007669"/>
    <property type="project" value="UniProtKB-KW"/>
</dbReference>
<dbReference type="HAMAP" id="MF_01354">
    <property type="entry name" value="NDH1_NDH1O"/>
    <property type="match status" value="1"/>
</dbReference>
<dbReference type="InterPro" id="IPR020905">
    <property type="entry name" value="NdhO"/>
</dbReference>
<dbReference type="Pfam" id="PF11910">
    <property type="entry name" value="NdhO"/>
    <property type="match status" value="1"/>
</dbReference>
<keyword id="KW-0472">Membrane</keyword>
<keyword id="KW-0520">NAD</keyword>
<keyword id="KW-0521">NADP</keyword>
<keyword id="KW-0618">Plastoquinone</keyword>
<keyword id="KW-0874">Quinone</keyword>
<keyword id="KW-1185">Reference proteome</keyword>
<keyword id="KW-0793">Thylakoid</keyword>
<keyword id="KW-1278">Translocase</keyword>
<keyword id="KW-0813">Transport</keyword>
<accession>Q3B027</accession>
<name>NDHO_SYNS9</name>
<comment type="function">
    <text evidence="1">NDH-1 shuttles electrons from an unknown electron donor, via FMN and iron-sulfur (Fe-S) centers, to quinones in the respiratory and/or the photosynthetic chain. The immediate electron acceptor for the enzyme in this species is believed to be plastoquinone. Couples the redox reaction to proton translocation, and thus conserves the redox energy in a proton gradient. Cyanobacterial NDH-1 also plays a role in inorganic carbon-concentration.</text>
</comment>
<comment type="catalytic activity">
    <reaction evidence="1">
        <text>a plastoquinone + NADH + (n+1) H(+)(in) = a plastoquinol + NAD(+) + n H(+)(out)</text>
        <dbReference type="Rhea" id="RHEA:42608"/>
        <dbReference type="Rhea" id="RHEA-COMP:9561"/>
        <dbReference type="Rhea" id="RHEA-COMP:9562"/>
        <dbReference type="ChEBI" id="CHEBI:15378"/>
        <dbReference type="ChEBI" id="CHEBI:17757"/>
        <dbReference type="ChEBI" id="CHEBI:57540"/>
        <dbReference type="ChEBI" id="CHEBI:57945"/>
        <dbReference type="ChEBI" id="CHEBI:62192"/>
    </reaction>
</comment>
<comment type="catalytic activity">
    <reaction evidence="1">
        <text>a plastoquinone + NADPH + (n+1) H(+)(in) = a plastoquinol + NADP(+) + n H(+)(out)</text>
        <dbReference type="Rhea" id="RHEA:42612"/>
        <dbReference type="Rhea" id="RHEA-COMP:9561"/>
        <dbReference type="Rhea" id="RHEA-COMP:9562"/>
        <dbReference type="ChEBI" id="CHEBI:15378"/>
        <dbReference type="ChEBI" id="CHEBI:17757"/>
        <dbReference type="ChEBI" id="CHEBI:57783"/>
        <dbReference type="ChEBI" id="CHEBI:58349"/>
        <dbReference type="ChEBI" id="CHEBI:62192"/>
    </reaction>
</comment>
<comment type="subunit">
    <text evidence="1">NDH-1 can be composed of about 15 different subunits; different subcomplexes with different compositions have been identified which probably have different functions.</text>
</comment>
<comment type="subcellular location">
    <subcellularLocation>
        <location evidence="1">Cellular thylakoid membrane</location>
        <topology evidence="1">Peripheral membrane protein</topology>
        <orientation evidence="1">Cytoplasmic side</orientation>
    </subcellularLocation>
</comment>
<comment type="similarity">
    <text evidence="1">Belongs to the complex I NdhO subunit family.</text>
</comment>
<organism>
    <name type="scientific">Synechococcus sp. (strain CC9902)</name>
    <dbReference type="NCBI Taxonomy" id="316279"/>
    <lineage>
        <taxon>Bacteria</taxon>
        <taxon>Bacillati</taxon>
        <taxon>Cyanobacteriota</taxon>
        <taxon>Cyanophyceae</taxon>
        <taxon>Synechococcales</taxon>
        <taxon>Synechococcaceae</taxon>
        <taxon>Synechococcus</taxon>
    </lineage>
</organism>